<comment type="function">
    <text evidence="2">Cell wall formation.</text>
</comment>
<comment type="catalytic activity">
    <reaction evidence="2">
        <text>2 D-alanine + ATP = D-alanyl-D-alanine + ADP + phosphate + H(+)</text>
        <dbReference type="Rhea" id="RHEA:11224"/>
        <dbReference type="ChEBI" id="CHEBI:15378"/>
        <dbReference type="ChEBI" id="CHEBI:30616"/>
        <dbReference type="ChEBI" id="CHEBI:43474"/>
        <dbReference type="ChEBI" id="CHEBI:57416"/>
        <dbReference type="ChEBI" id="CHEBI:57822"/>
        <dbReference type="ChEBI" id="CHEBI:456216"/>
        <dbReference type="EC" id="6.3.2.4"/>
    </reaction>
</comment>
<comment type="cofactor">
    <cofactor evidence="1">
        <name>Mg(2+)</name>
        <dbReference type="ChEBI" id="CHEBI:18420"/>
    </cofactor>
    <cofactor evidence="1">
        <name>Mn(2+)</name>
        <dbReference type="ChEBI" id="CHEBI:29035"/>
    </cofactor>
    <text evidence="1">Binds 2 magnesium or manganese ions per subunit.</text>
</comment>
<comment type="pathway">
    <text evidence="2">Cell wall biogenesis; peptidoglycan biosynthesis.</text>
</comment>
<comment type="subcellular location">
    <subcellularLocation>
        <location evidence="2">Cytoplasm</location>
    </subcellularLocation>
</comment>
<comment type="similarity">
    <text evidence="2">Belongs to the D-alanine--D-alanine ligase family.</text>
</comment>
<name>DDL_STRPJ</name>
<proteinExistence type="inferred from homology"/>
<feature type="chain" id="PRO_1000189747" description="D-alanine--D-alanine ligase">
    <location>
        <begin position="1"/>
        <end position="347"/>
    </location>
</feature>
<feature type="domain" description="ATP-grasp" evidence="2">
    <location>
        <begin position="131"/>
        <end position="333"/>
    </location>
</feature>
<feature type="binding site" evidence="2">
    <location>
        <begin position="161"/>
        <end position="216"/>
    </location>
    <ligand>
        <name>ATP</name>
        <dbReference type="ChEBI" id="CHEBI:30616"/>
    </ligand>
</feature>
<feature type="binding site" evidence="2">
    <location>
        <position position="287"/>
    </location>
    <ligand>
        <name>Mg(2+)</name>
        <dbReference type="ChEBI" id="CHEBI:18420"/>
        <label>1</label>
    </ligand>
</feature>
<feature type="binding site" evidence="2">
    <location>
        <position position="300"/>
    </location>
    <ligand>
        <name>Mg(2+)</name>
        <dbReference type="ChEBI" id="CHEBI:18420"/>
        <label>1</label>
    </ligand>
</feature>
<feature type="binding site" evidence="2">
    <location>
        <position position="300"/>
    </location>
    <ligand>
        <name>Mg(2+)</name>
        <dbReference type="ChEBI" id="CHEBI:18420"/>
        <label>2</label>
    </ligand>
</feature>
<feature type="binding site" evidence="2">
    <location>
        <position position="302"/>
    </location>
    <ligand>
        <name>Mg(2+)</name>
        <dbReference type="ChEBI" id="CHEBI:18420"/>
        <label>2</label>
    </ligand>
</feature>
<dbReference type="EC" id="6.3.2.4" evidence="2"/>
<dbReference type="EMBL" id="FM211187">
    <property type="protein sequence ID" value="CAR69444.1"/>
    <property type="molecule type" value="Genomic_DNA"/>
</dbReference>
<dbReference type="RefSeq" id="WP_000814694.1">
    <property type="nucleotide sequence ID" value="NC_011900.1"/>
</dbReference>
<dbReference type="SMR" id="B8ZM66"/>
<dbReference type="KEGG" id="sne:SPN23F16720"/>
<dbReference type="HOGENOM" id="CLU_039268_0_0_9"/>
<dbReference type="UniPathway" id="UPA00219"/>
<dbReference type="GO" id="GO:0005829">
    <property type="term" value="C:cytosol"/>
    <property type="evidence" value="ECO:0007669"/>
    <property type="project" value="TreeGrafter"/>
</dbReference>
<dbReference type="GO" id="GO:0005524">
    <property type="term" value="F:ATP binding"/>
    <property type="evidence" value="ECO:0007669"/>
    <property type="project" value="UniProtKB-KW"/>
</dbReference>
<dbReference type="GO" id="GO:0008716">
    <property type="term" value="F:D-alanine-D-alanine ligase activity"/>
    <property type="evidence" value="ECO:0007669"/>
    <property type="project" value="UniProtKB-UniRule"/>
</dbReference>
<dbReference type="GO" id="GO:0046872">
    <property type="term" value="F:metal ion binding"/>
    <property type="evidence" value="ECO:0007669"/>
    <property type="project" value="UniProtKB-KW"/>
</dbReference>
<dbReference type="GO" id="GO:0071555">
    <property type="term" value="P:cell wall organization"/>
    <property type="evidence" value="ECO:0007669"/>
    <property type="project" value="UniProtKB-KW"/>
</dbReference>
<dbReference type="GO" id="GO:0009252">
    <property type="term" value="P:peptidoglycan biosynthetic process"/>
    <property type="evidence" value="ECO:0007669"/>
    <property type="project" value="UniProtKB-UniRule"/>
</dbReference>
<dbReference type="GO" id="GO:0008360">
    <property type="term" value="P:regulation of cell shape"/>
    <property type="evidence" value="ECO:0007669"/>
    <property type="project" value="UniProtKB-KW"/>
</dbReference>
<dbReference type="FunFam" id="3.30.1490.20:FF:000007">
    <property type="entry name" value="D-alanine--D-alanine ligase"/>
    <property type="match status" value="1"/>
</dbReference>
<dbReference type="FunFam" id="3.30.470.20:FF:000008">
    <property type="entry name" value="D-alanine--D-alanine ligase"/>
    <property type="match status" value="1"/>
</dbReference>
<dbReference type="FunFam" id="3.40.50.20:FF:000029">
    <property type="entry name" value="D-alanine--D-alanine ligase"/>
    <property type="match status" value="1"/>
</dbReference>
<dbReference type="Gene3D" id="3.40.50.20">
    <property type="match status" value="1"/>
</dbReference>
<dbReference type="Gene3D" id="3.30.1490.20">
    <property type="entry name" value="ATP-grasp fold, A domain"/>
    <property type="match status" value="1"/>
</dbReference>
<dbReference type="Gene3D" id="3.30.470.20">
    <property type="entry name" value="ATP-grasp fold, B domain"/>
    <property type="match status" value="1"/>
</dbReference>
<dbReference type="HAMAP" id="MF_00047">
    <property type="entry name" value="Dala_Dala_lig"/>
    <property type="match status" value="1"/>
</dbReference>
<dbReference type="InterPro" id="IPR011761">
    <property type="entry name" value="ATP-grasp"/>
</dbReference>
<dbReference type="InterPro" id="IPR013815">
    <property type="entry name" value="ATP_grasp_subdomain_1"/>
</dbReference>
<dbReference type="InterPro" id="IPR000291">
    <property type="entry name" value="D-Ala_lig_Van_CS"/>
</dbReference>
<dbReference type="InterPro" id="IPR005905">
    <property type="entry name" value="D_ala_D_ala"/>
</dbReference>
<dbReference type="InterPro" id="IPR011095">
    <property type="entry name" value="Dala_Dala_lig_C"/>
</dbReference>
<dbReference type="InterPro" id="IPR011127">
    <property type="entry name" value="Dala_Dala_lig_N"/>
</dbReference>
<dbReference type="InterPro" id="IPR016185">
    <property type="entry name" value="PreATP-grasp_dom_sf"/>
</dbReference>
<dbReference type="NCBIfam" id="TIGR01205">
    <property type="entry name" value="D_ala_D_alaTIGR"/>
    <property type="match status" value="1"/>
</dbReference>
<dbReference type="NCBIfam" id="NF002528">
    <property type="entry name" value="PRK01966.1-4"/>
    <property type="match status" value="1"/>
</dbReference>
<dbReference type="NCBIfam" id="NF002529">
    <property type="entry name" value="PRK01966.1-5"/>
    <property type="match status" value="1"/>
</dbReference>
<dbReference type="PANTHER" id="PTHR23132">
    <property type="entry name" value="D-ALANINE--D-ALANINE LIGASE"/>
    <property type="match status" value="1"/>
</dbReference>
<dbReference type="PANTHER" id="PTHR23132:SF25">
    <property type="entry name" value="D-ALANINE--D-ALANINE LIGASE A"/>
    <property type="match status" value="1"/>
</dbReference>
<dbReference type="Pfam" id="PF07478">
    <property type="entry name" value="Dala_Dala_lig_C"/>
    <property type="match status" value="1"/>
</dbReference>
<dbReference type="Pfam" id="PF01820">
    <property type="entry name" value="Dala_Dala_lig_N"/>
    <property type="match status" value="1"/>
</dbReference>
<dbReference type="PIRSF" id="PIRSF039102">
    <property type="entry name" value="Ddl/VanB"/>
    <property type="match status" value="1"/>
</dbReference>
<dbReference type="SUPFAM" id="SSF56059">
    <property type="entry name" value="Glutathione synthetase ATP-binding domain-like"/>
    <property type="match status" value="1"/>
</dbReference>
<dbReference type="SUPFAM" id="SSF52440">
    <property type="entry name" value="PreATP-grasp domain"/>
    <property type="match status" value="1"/>
</dbReference>
<dbReference type="PROSITE" id="PS50975">
    <property type="entry name" value="ATP_GRASP"/>
    <property type="match status" value="1"/>
</dbReference>
<dbReference type="PROSITE" id="PS00843">
    <property type="entry name" value="DALA_DALA_LIGASE_1"/>
    <property type="match status" value="1"/>
</dbReference>
<dbReference type="PROSITE" id="PS00844">
    <property type="entry name" value="DALA_DALA_LIGASE_2"/>
    <property type="match status" value="1"/>
</dbReference>
<sequence>MKQTIILLYGGRSAEREVSVLSAESVMRAVNYDRFTVKTFFISQSGDSIKTQEFSHAPGQEDRLMTNETIDWDKKVAPSAIYEEGAVVFPVLHGPMGEDGSVQGFLEVLKMPYVGCNILSSSLAMDKITTKRVLESAGIAQVPYVAIVEGDDVTAKIAEVEEKLAYPVFTKPSNMGSSVGISKSENQEELRQALKLAFRYDSRVLVEQGVNAREIEVGLLGNYDVKSTLPGEVVKDVAFYDYDAKYIDNKVTMDIPAKISDDVVAVMRQNAETAFRAIGGLGLSRCDFFYTDKGEIFLNELNTMPGFTQWSMYPLLWENMGISYPELIERLVDLAKESFDKREAHLI</sequence>
<evidence type="ECO:0000250" key="1"/>
<evidence type="ECO:0000255" key="2">
    <source>
        <dbReference type="HAMAP-Rule" id="MF_00047"/>
    </source>
</evidence>
<keyword id="KW-0067">ATP-binding</keyword>
<keyword id="KW-0133">Cell shape</keyword>
<keyword id="KW-0961">Cell wall biogenesis/degradation</keyword>
<keyword id="KW-0963">Cytoplasm</keyword>
<keyword id="KW-0436">Ligase</keyword>
<keyword id="KW-0460">Magnesium</keyword>
<keyword id="KW-0464">Manganese</keyword>
<keyword id="KW-0479">Metal-binding</keyword>
<keyword id="KW-0547">Nucleotide-binding</keyword>
<keyword id="KW-0573">Peptidoglycan synthesis</keyword>
<reference key="1">
    <citation type="journal article" date="2009" name="J. Bacteriol.">
        <title>Role of conjugative elements in the evolution of the multidrug-resistant pandemic clone Streptococcus pneumoniae Spain23F ST81.</title>
        <authorList>
            <person name="Croucher N.J."/>
            <person name="Walker D."/>
            <person name="Romero P."/>
            <person name="Lennard N."/>
            <person name="Paterson G.K."/>
            <person name="Bason N.C."/>
            <person name="Mitchell A.M."/>
            <person name="Quail M.A."/>
            <person name="Andrew P.W."/>
            <person name="Parkhill J."/>
            <person name="Bentley S.D."/>
            <person name="Mitchell T.J."/>
        </authorList>
    </citation>
    <scope>NUCLEOTIDE SEQUENCE [LARGE SCALE GENOMIC DNA]</scope>
    <source>
        <strain>ATCC 700669 / Spain 23F-1</strain>
    </source>
</reference>
<gene>
    <name evidence="2" type="primary">ddl</name>
    <name type="ordered locus">SPN23F16720</name>
</gene>
<accession>B8ZM66</accession>
<organism>
    <name type="scientific">Streptococcus pneumoniae (strain ATCC 700669 / Spain 23F-1)</name>
    <dbReference type="NCBI Taxonomy" id="561276"/>
    <lineage>
        <taxon>Bacteria</taxon>
        <taxon>Bacillati</taxon>
        <taxon>Bacillota</taxon>
        <taxon>Bacilli</taxon>
        <taxon>Lactobacillales</taxon>
        <taxon>Streptococcaceae</taxon>
        <taxon>Streptococcus</taxon>
    </lineage>
</organism>
<protein>
    <recommendedName>
        <fullName evidence="2">D-alanine--D-alanine ligase</fullName>
        <ecNumber evidence="2">6.3.2.4</ecNumber>
    </recommendedName>
    <alternativeName>
        <fullName evidence="2">D-Ala-D-Ala ligase</fullName>
    </alternativeName>
    <alternativeName>
        <fullName evidence="2">D-alanylalanine synthetase</fullName>
    </alternativeName>
</protein>